<evidence type="ECO:0000255" key="1">
    <source>
        <dbReference type="HAMAP-Rule" id="MF_01636"/>
    </source>
</evidence>
<evidence type="ECO:0000305" key="2"/>
<feature type="chain" id="PRO_0000267651" description="3-octaprenyl-4-hydroxybenzoate carboxy-lyase">
    <location>
        <begin position="1"/>
        <end position="514"/>
    </location>
</feature>
<feature type="active site" description="Proton donor" evidence="1">
    <location>
        <position position="314"/>
    </location>
</feature>
<feature type="binding site" evidence="1">
    <location>
        <position position="177"/>
    </location>
    <ligand>
        <name>Mn(2+)</name>
        <dbReference type="ChEBI" id="CHEBI:29035"/>
    </ligand>
</feature>
<feature type="binding site" evidence="1">
    <location>
        <begin position="180"/>
        <end position="182"/>
    </location>
    <ligand>
        <name>prenylated FMN</name>
        <dbReference type="ChEBI" id="CHEBI:87746"/>
    </ligand>
</feature>
<feature type="binding site" evidence="1">
    <location>
        <begin position="194"/>
        <end position="196"/>
    </location>
    <ligand>
        <name>prenylated FMN</name>
        <dbReference type="ChEBI" id="CHEBI:87746"/>
    </ligand>
</feature>
<feature type="binding site" evidence="1">
    <location>
        <begin position="199"/>
        <end position="200"/>
    </location>
    <ligand>
        <name>prenylated FMN</name>
        <dbReference type="ChEBI" id="CHEBI:87746"/>
    </ligand>
</feature>
<feature type="binding site" evidence="1">
    <location>
        <position position="243"/>
    </location>
    <ligand>
        <name>Mn(2+)</name>
        <dbReference type="ChEBI" id="CHEBI:29035"/>
    </ligand>
</feature>
<proteinExistence type="inferred from homology"/>
<protein>
    <recommendedName>
        <fullName evidence="1">3-octaprenyl-4-hydroxybenzoate carboxy-lyase</fullName>
        <ecNumber evidence="1">4.1.1.98</ecNumber>
    </recommendedName>
    <alternativeName>
        <fullName evidence="1">Polyprenyl p-hydroxybenzoate decarboxylase</fullName>
    </alternativeName>
</protein>
<keyword id="KW-1003">Cell membrane</keyword>
<keyword id="KW-0210">Decarboxylase</keyword>
<keyword id="KW-0285">Flavoprotein</keyword>
<keyword id="KW-0288">FMN</keyword>
<keyword id="KW-0456">Lyase</keyword>
<keyword id="KW-0464">Manganese</keyword>
<keyword id="KW-0472">Membrane</keyword>
<keyword id="KW-0479">Metal-binding</keyword>
<keyword id="KW-1185">Reference proteome</keyword>
<keyword id="KW-0831">Ubiquinone biosynthesis</keyword>
<reference key="1">
    <citation type="journal article" date="2003" name="Nat. Genet.">
        <title>Comparative analysis of the genome sequences of Bordetella pertussis, Bordetella parapertussis and Bordetella bronchiseptica.</title>
        <authorList>
            <person name="Parkhill J."/>
            <person name="Sebaihia M."/>
            <person name="Preston A."/>
            <person name="Murphy L.D."/>
            <person name="Thomson N.R."/>
            <person name="Harris D.E."/>
            <person name="Holden M.T.G."/>
            <person name="Churcher C.M."/>
            <person name="Bentley S.D."/>
            <person name="Mungall K.L."/>
            <person name="Cerdeno-Tarraga A.-M."/>
            <person name="Temple L."/>
            <person name="James K.D."/>
            <person name="Harris B."/>
            <person name="Quail M.A."/>
            <person name="Achtman M."/>
            <person name="Atkin R."/>
            <person name="Baker S."/>
            <person name="Basham D."/>
            <person name="Bason N."/>
            <person name="Cherevach I."/>
            <person name="Chillingworth T."/>
            <person name="Collins M."/>
            <person name="Cronin A."/>
            <person name="Davis P."/>
            <person name="Doggett J."/>
            <person name="Feltwell T."/>
            <person name="Goble A."/>
            <person name="Hamlin N."/>
            <person name="Hauser H."/>
            <person name="Holroyd S."/>
            <person name="Jagels K."/>
            <person name="Leather S."/>
            <person name="Moule S."/>
            <person name="Norberczak H."/>
            <person name="O'Neil S."/>
            <person name="Ormond D."/>
            <person name="Price C."/>
            <person name="Rabbinowitsch E."/>
            <person name="Rutter S."/>
            <person name="Sanders M."/>
            <person name="Saunders D."/>
            <person name="Seeger K."/>
            <person name="Sharp S."/>
            <person name="Simmonds M."/>
            <person name="Skelton J."/>
            <person name="Squares R."/>
            <person name="Squares S."/>
            <person name="Stevens K."/>
            <person name="Unwin L."/>
            <person name="Whitehead S."/>
            <person name="Barrell B.G."/>
            <person name="Maskell D.J."/>
        </authorList>
    </citation>
    <scope>NUCLEOTIDE SEQUENCE [LARGE SCALE GENOMIC DNA]</scope>
    <source>
        <strain>Tohama I / ATCC BAA-589 / NCTC 13251</strain>
    </source>
</reference>
<gene>
    <name evidence="1" type="primary">ubiD</name>
    <name type="ordered locus">BP1060</name>
</gene>
<dbReference type="EC" id="4.1.1.98" evidence="1"/>
<dbReference type="EMBL" id="BX640414">
    <property type="protein sequence ID" value="CAE41359.1"/>
    <property type="status" value="ALT_INIT"/>
    <property type="molecule type" value="Genomic_DNA"/>
</dbReference>
<dbReference type="RefSeq" id="NP_879845.1">
    <property type="nucleotide sequence ID" value="NC_002929.2"/>
</dbReference>
<dbReference type="RefSeq" id="WP_023853525.1">
    <property type="nucleotide sequence ID" value="NZ_CP039022.1"/>
</dbReference>
<dbReference type="SMR" id="Q7VZ72"/>
<dbReference type="STRING" id="257313.BP1060"/>
<dbReference type="PaxDb" id="257313-BP1060"/>
<dbReference type="GeneID" id="69600983"/>
<dbReference type="KEGG" id="bpe:BP1060"/>
<dbReference type="PATRIC" id="fig|257313.5.peg.1132"/>
<dbReference type="eggNOG" id="COG0043">
    <property type="taxonomic scope" value="Bacteria"/>
</dbReference>
<dbReference type="HOGENOM" id="CLU_023348_4_1_4"/>
<dbReference type="UniPathway" id="UPA00232"/>
<dbReference type="Proteomes" id="UP000002676">
    <property type="component" value="Chromosome"/>
</dbReference>
<dbReference type="GO" id="GO:0005829">
    <property type="term" value="C:cytosol"/>
    <property type="evidence" value="ECO:0007669"/>
    <property type="project" value="TreeGrafter"/>
</dbReference>
<dbReference type="GO" id="GO:0005886">
    <property type="term" value="C:plasma membrane"/>
    <property type="evidence" value="ECO:0007669"/>
    <property type="project" value="UniProtKB-SubCell"/>
</dbReference>
<dbReference type="GO" id="GO:0008694">
    <property type="term" value="F:3-octaprenyl-4-hydroxybenzoate carboxy-lyase activity"/>
    <property type="evidence" value="ECO:0007669"/>
    <property type="project" value="UniProtKB-UniRule"/>
</dbReference>
<dbReference type="GO" id="GO:0046872">
    <property type="term" value="F:metal ion binding"/>
    <property type="evidence" value="ECO:0007669"/>
    <property type="project" value="UniProtKB-KW"/>
</dbReference>
<dbReference type="GO" id="GO:0006744">
    <property type="term" value="P:ubiquinone biosynthetic process"/>
    <property type="evidence" value="ECO:0007669"/>
    <property type="project" value="UniProtKB-UniRule"/>
</dbReference>
<dbReference type="FunFam" id="1.20.5.570:FF:000001">
    <property type="entry name" value="3-octaprenyl-4-hydroxybenzoate carboxy-lyase"/>
    <property type="match status" value="1"/>
</dbReference>
<dbReference type="FunFam" id="3.40.1670.10:FF:000001">
    <property type="entry name" value="3-octaprenyl-4-hydroxybenzoate carboxy-lyase"/>
    <property type="match status" value="1"/>
</dbReference>
<dbReference type="Gene3D" id="1.20.5.570">
    <property type="entry name" value="Single helix bin"/>
    <property type="match status" value="1"/>
</dbReference>
<dbReference type="Gene3D" id="3.40.1670.10">
    <property type="entry name" value="UbiD C-terminal domain-like"/>
    <property type="match status" value="1"/>
</dbReference>
<dbReference type="HAMAP" id="MF_01636">
    <property type="entry name" value="UbiD"/>
    <property type="match status" value="1"/>
</dbReference>
<dbReference type="InterPro" id="IPR002830">
    <property type="entry name" value="UbiD"/>
</dbReference>
<dbReference type="InterPro" id="IPR049381">
    <property type="entry name" value="UbiD-like_C"/>
</dbReference>
<dbReference type="InterPro" id="IPR049383">
    <property type="entry name" value="UbiD-like_N"/>
</dbReference>
<dbReference type="InterPro" id="IPR023677">
    <property type="entry name" value="UbiD_bacteria"/>
</dbReference>
<dbReference type="InterPro" id="IPR048304">
    <property type="entry name" value="UbiD_Rift_dom"/>
</dbReference>
<dbReference type="NCBIfam" id="NF008175">
    <property type="entry name" value="PRK10922.1"/>
    <property type="match status" value="1"/>
</dbReference>
<dbReference type="NCBIfam" id="TIGR00148">
    <property type="entry name" value="UbiD family decarboxylase"/>
    <property type="match status" value="2"/>
</dbReference>
<dbReference type="PANTHER" id="PTHR30108">
    <property type="entry name" value="3-OCTAPRENYL-4-HYDROXYBENZOATE CARBOXY-LYASE-RELATED"/>
    <property type="match status" value="1"/>
</dbReference>
<dbReference type="PANTHER" id="PTHR30108:SF17">
    <property type="entry name" value="FERULIC ACID DECARBOXYLASE 1"/>
    <property type="match status" value="1"/>
</dbReference>
<dbReference type="Pfam" id="PF01977">
    <property type="entry name" value="UbiD"/>
    <property type="match status" value="1"/>
</dbReference>
<dbReference type="Pfam" id="PF20696">
    <property type="entry name" value="UbiD_C"/>
    <property type="match status" value="1"/>
</dbReference>
<dbReference type="Pfam" id="PF20695">
    <property type="entry name" value="UbiD_N"/>
    <property type="match status" value="1"/>
</dbReference>
<dbReference type="SUPFAM" id="SSF50475">
    <property type="entry name" value="FMN-binding split barrel"/>
    <property type="match status" value="1"/>
</dbReference>
<dbReference type="SUPFAM" id="SSF143968">
    <property type="entry name" value="UbiD C-terminal domain-like"/>
    <property type="match status" value="1"/>
</dbReference>
<accession>Q7VZ72</accession>
<name>UBID_BORPE</name>
<comment type="function">
    <text evidence="1">Catalyzes the decarboxylation of 3-octaprenyl-4-hydroxy benzoate to 2-octaprenylphenol, an intermediate step in ubiquinone biosynthesis.</text>
</comment>
<comment type="catalytic activity">
    <reaction evidence="1">
        <text>a 4-hydroxy-3-(all-trans-polyprenyl)benzoate + H(+) = a 2-(all-trans-polyprenyl)phenol + CO2</text>
        <dbReference type="Rhea" id="RHEA:41680"/>
        <dbReference type="Rhea" id="RHEA-COMP:9514"/>
        <dbReference type="Rhea" id="RHEA-COMP:9516"/>
        <dbReference type="ChEBI" id="CHEBI:1269"/>
        <dbReference type="ChEBI" id="CHEBI:15378"/>
        <dbReference type="ChEBI" id="CHEBI:16526"/>
        <dbReference type="ChEBI" id="CHEBI:78396"/>
        <dbReference type="EC" id="4.1.1.98"/>
    </reaction>
</comment>
<comment type="cofactor">
    <cofactor evidence="1">
        <name>prenylated FMN</name>
        <dbReference type="ChEBI" id="CHEBI:87746"/>
    </cofactor>
    <text evidence="1">Binds 1 prenylated FMN per subunit.</text>
</comment>
<comment type="cofactor">
    <cofactor evidence="1">
        <name>Mn(2+)</name>
        <dbReference type="ChEBI" id="CHEBI:29035"/>
    </cofactor>
</comment>
<comment type="pathway">
    <text evidence="1">Cofactor biosynthesis; ubiquinone biosynthesis.</text>
</comment>
<comment type="subunit">
    <text evidence="1">Homohexamer.</text>
</comment>
<comment type="subcellular location">
    <subcellularLocation>
        <location evidence="1">Cell membrane</location>
        <topology evidence="1">Peripheral membrane protein</topology>
    </subcellularLocation>
</comment>
<comment type="similarity">
    <text evidence="1">Belongs to the UbiD family.</text>
</comment>
<comment type="sequence caution" evidence="2">
    <conflict type="erroneous initiation">
        <sequence resource="EMBL-CDS" id="CAE41359"/>
    </conflict>
</comment>
<organism>
    <name type="scientific">Bordetella pertussis (strain Tohama I / ATCC BAA-589 / NCTC 13251)</name>
    <dbReference type="NCBI Taxonomy" id="257313"/>
    <lineage>
        <taxon>Bacteria</taxon>
        <taxon>Pseudomonadati</taxon>
        <taxon>Pseudomonadota</taxon>
        <taxon>Betaproteobacteria</taxon>
        <taxon>Burkholderiales</taxon>
        <taxon>Alcaligenaceae</taxon>
        <taxon>Bordetella</taxon>
    </lineage>
</organism>
<sequence length="514" mass="56839">MKYRDLRDFLAQLERQGELKRITAPVSTRLEMTEIADRVLRAGGPALLFENARHNDAPADMPVLANLFGTPRRVAWGMGADDVGALRETGELLASLREPEAPKGLRDALAKVSMLKAALWDMSPKTVRSAACQEIVWEGADVELSRLPIQTCWPGDVAPLLAWGLVITRGPNARRQNLGIYRQQPLGPNKLIMRWLSHRGGALDFRDHAQAHPGKPFPITVALGADPATILGAVTPVPDTLSEYQFAGLLRGSRTEVVKALGSDLSVPASAEIVLEGHLLPADDPRAVAAVVPEGANPPPATGYEMALEGPYGDHTGYYNEQDWFPVFTVDRITMRRNPIYHSTYTGKPPDEPAVLGVALNEVFVPLLRRQLPEIVDFYLPPEGCSYRLAVVSIRKQYAGHAKRVMFGLWSVLRQFMYTKFIVVVDEDIDPRDWTEVVWAMTTRMDPVRDTVLVENAPIDYLDFASPVSGLGGKMGLDATNKWPGETSREWGTPIHMDEAVKRRVDAMWDTLGL</sequence>